<accession>Q0J360</accession>
<accession>A0A0P0XL00</accession>
<accession>Q56UC9</accession>
<accession>Q56UM5</accession>
<accession>Q6K311</accession>
<accession>Q9XGV7</accession>
<organism>
    <name type="scientific">Oryza sativa subsp. japonica</name>
    <name type="common">Rice</name>
    <dbReference type="NCBI Taxonomy" id="39947"/>
    <lineage>
        <taxon>Eukaryota</taxon>
        <taxon>Viridiplantae</taxon>
        <taxon>Streptophyta</taxon>
        <taxon>Embryophyta</taxon>
        <taxon>Tracheophyta</taxon>
        <taxon>Spermatophyta</taxon>
        <taxon>Magnoliopsida</taxon>
        <taxon>Liliopsida</taxon>
        <taxon>Poales</taxon>
        <taxon>Poaceae</taxon>
        <taxon>BOP clade</taxon>
        <taxon>Oryzoideae</taxon>
        <taxon>Oryzeae</taxon>
        <taxon>Oryzinae</taxon>
        <taxon>Oryza</taxon>
        <taxon>Oryza sativa</taxon>
    </lineage>
</organism>
<proteinExistence type="evidence at transcript level"/>
<keyword id="KW-0052">Apoplast</keyword>
<keyword id="KW-0134">Cell wall</keyword>
<keyword id="KW-1015">Disulfide bond</keyword>
<keyword id="KW-0325">Glycoprotein</keyword>
<keyword id="KW-0326">Glycosidase</keyword>
<keyword id="KW-0378">Hydrolase</keyword>
<keyword id="KW-1185">Reference proteome</keyword>
<keyword id="KW-0964">Secreted</keyword>
<keyword id="KW-0732">Signal</keyword>
<evidence type="ECO:0000250" key="1"/>
<evidence type="ECO:0000255" key="2"/>
<evidence type="ECO:0000269" key="3">
    <source>
    </source>
</evidence>
<evidence type="ECO:0000269" key="4">
    <source>
    </source>
</evidence>
<evidence type="ECO:0000269" key="5">
    <source>
    </source>
</evidence>
<evidence type="ECO:0000305" key="6"/>
<sequence length="596" mass="65490">MARLGLAVCAASFHLFLLLASTSSLRRAPTEADTANHARRTAYHFQPAKNWQNDPNGPMYHNGMYHLFYQYNPHSALWDIGNLSWGHSVSGDLLNWAALDTALDPTSPFDANGCWSGSATILPGALPAILYTGIDASKEQVQNVAFAKNPSDPLLREWEKPAYNPVIALPADVPGDKFRDPSTAWLGRDGLWRIAVSAEVDGVASTLVYRSKDFVRWERNAAPLHASRAAGMVECPDLFPVAERGEDGLDTSANGAGGVRHVLKLSVMDTLQDYYMVGTYDDAADAFSPAEPERGDDCRSWRRLDYGHVYASKSFFDVRKNRRVLWAWANESDSQADDVARGWSGVQTFPRKMWLAKDGKQLLQWPIEEIKTLRRKRAGLWQGTRLGAGAVQEIVGVASSQADVEVVFKIPSLEEAERVDDPNRLLDPQKLCGEKGAAVRGGVGPFGLLVMASGDLHEHTAVFFRVFRHHDKYKLLMCTDLTKSSTRAGVYKPAYGGFVDMDIDDHKTISLRTLIDHSVVESFGGGGRACITARVYPEHVATSSSHLYVFNNGSDAVKVAKLEAWDLATATVNVVVGDHHGLVAPALELEPTRTTQ</sequence>
<gene>
    <name type="primary">CIN7</name>
    <name type="synonym">INV1</name>
    <name type="ordered locus">Os09g0255000</name>
    <name type="ordered locus">LOC_Os09g08072</name>
    <name type="ORF">OSJNBb0066C12.30</name>
</gene>
<feature type="signal peptide" evidence="2">
    <location>
        <begin position="1"/>
        <end position="24"/>
    </location>
</feature>
<feature type="chain" id="PRO_0000033384" description="Beta-fructofuranosidase, insoluble isoenzyme 7">
    <location>
        <begin position="25"/>
        <end position="596"/>
    </location>
</feature>
<feature type="active site" evidence="1">
    <location>
        <position position="54"/>
    </location>
</feature>
<feature type="binding site" evidence="1">
    <location>
        <begin position="51"/>
        <end position="54"/>
    </location>
    <ligand>
        <name>substrate</name>
    </ligand>
</feature>
<feature type="binding site" evidence="1">
    <location>
        <position position="70"/>
    </location>
    <ligand>
        <name>substrate</name>
    </ligand>
</feature>
<feature type="binding site" evidence="1">
    <location>
        <position position="78"/>
    </location>
    <ligand>
        <name>substrate</name>
    </ligand>
</feature>
<feature type="binding site" evidence="1">
    <location>
        <begin position="115"/>
        <end position="116"/>
    </location>
    <ligand>
        <name>substrate</name>
    </ligand>
</feature>
<feature type="binding site" evidence="1">
    <location>
        <begin position="179"/>
        <end position="180"/>
    </location>
    <ligand>
        <name>substrate</name>
    </ligand>
</feature>
<feature type="binding site" evidence="1">
    <location>
        <position position="234"/>
    </location>
    <ligand>
        <name>substrate</name>
    </ligand>
</feature>
<feature type="glycosylation site" description="N-linked (GlcNAc...) asparagine" evidence="2">
    <location>
        <position position="82"/>
    </location>
</feature>
<feature type="glycosylation site" description="N-linked (GlcNAc...) asparagine" evidence="2">
    <location>
        <position position="330"/>
    </location>
</feature>
<feature type="glycosylation site" description="N-linked (GlcNAc...) asparagine" evidence="2">
    <location>
        <position position="552"/>
    </location>
</feature>
<feature type="disulfide bond" evidence="1">
    <location>
        <begin position="432"/>
        <end position="478"/>
    </location>
</feature>
<comment type="function">
    <text>May play a role in sucrose partitioning during seed development.</text>
</comment>
<comment type="catalytic activity">
    <reaction>
        <text>Hydrolysis of terminal non-reducing beta-D-fructofuranoside residues in beta-D-fructofuranosides.</text>
        <dbReference type="EC" id="3.2.1.26"/>
    </reaction>
</comment>
<comment type="subcellular location">
    <subcellularLocation>
        <location evidence="6">Secreted</location>
        <location evidence="6">Extracellular space</location>
        <location evidence="6">Apoplast</location>
    </subcellularLocation>
    <subcellularLocation>
        <location evidence="6">Secreted</location>
        <location evidence="6">Cell wall</location>
    </subcellularLocation>
    <text evidence="6">Associated to the cell wall.</text>
</comment>
<comment type="tissue specificity">
    <text evidence="3 5">Expressed in roots, leaves and flowers. Weakly expressed in seeds.</text>
</comment>
<comment type="developmental stage">
    <text evidence="3 4 5">Expressed from 1 to 15 days after flowering.</text>
</comment>
<comment type="similarity">
    <text evidence="6">Belongs to the glycosyl hydrolase 32 family.</text>
</comment>
<reference key="1">
    <citation type="journal article" date="2005" name="Plant Cell Rep.">
        <title>Molecular cloning and expression analysis of the cell-wall invertase gene family in rice (Oryza sativa L.).</title>
        <authorList>
            <person name="Cho J.-I."/>
            <person name="Lee S.-K."/>
            <person name="Ko S."/>
            <person name="Kim H.-K."/>
            <person name="Jun S.-H."/>
            <person name="Lee Y.-H."/>
            <person name="Bhoo S.H."/>
            <person name="Lee K.-W."/>
            <person name="An G."/>
            <person name="Hahn T.-R."/>
            <person name="Jeon J.-S."/>
        </authorList>
    </citation>
    <scope>NUCLEOTIDE SEQUENCE [MRNA]</scope>
    <scope>TISSUE SPECIFICITY</scope>
    <scope>DEVELOPMENTAL STAGE</scope>
    <source>
        <strain>cv. Nipponbare</strain>
    </source>
</reference>
<reference key="2">
    <citation type="journal article" date="2005" name="Nature">
        <title>The map-based sequence of the rice genome.</title>
        <authorList>
            <consortium name="International rice genome sequencing project (IRGSP)"/>
        </authorList>
    </citation>
    <scope>NUCLEOTIDE SEQUENCE [LARGE SCALE GENOMIC DNA]</scope>
    <source>
        <strain>cv. Nipponbare</strain>
    </source>
</reference>
<reference key="3">
    <citation type="journal article" date="2008" name="Nucleic Acids Res.">
        <title>The rice annotation project database (RAP-DB): 2008 update.</title>
        <authorList>
            <consortium name="The rice annotation project (RAP)"/>
        </authorList>
    </citation>
    <scope>GENOME REANNOTATION</scope>
    <source>
        <strain>cv. Nipponbare</strain>
    </source>
</reference>
<reference key="4">
    <citation type="journal article" date="2013" name="Rice">
        <title>Improvement of the Oryza sativa Nipponbare reference genome using next generation sequence and optical map data.</title>
        <authorList>
            <person name="Kawahara Y."/>
            <person name="de la Bastide M."/>
            <person name="Hamilton J.P."/>
            <person name="Kanamori H."/>
            <person name="McCombie W.R."/>
            <person name="Ouyang S."/>
            <person name="Schwartz D.C."/>
            <person name="Tanaka T."/>
            <person name="Wu J."/>
            <person name="Zhou S."/>
            <person name="Childs K.L."/>
            <person name="Davidson R.M."/>
            <person name="Lin H."/>
            <person name="Quesada-Ocampo L."/>
            <person name="Vaillancourt B."/>
            <person name="Sakai H."/>
            <person name="Lee S.S."/>
            <person name="Kim J."/>
            <person name="Numa H."/>
            <person name="Itoh T."/>
            <person name="Buell C.R."/>
            <person name="Matsumoto T."/>
        </authorList>
    </citation>
    <scope>GENOME REANNOTATION</scope>
    <source>
        <strain>cv. Nipponbare</strain>
    </source>
</reference>
<reference key="5">
    <citation type="journal article" date="2002" name="Plant Cell Physiol.">
        <title>Cell wall invertase in developing rice caryopsis: molecular cloning of OsCIN1 and analysis of its expression in relation to its role in grain filling.</title>
        <authorList>
            <person name="Hirose T."/>
            <person name="Takano M."/>
            <person name="Terao T."/>
        </authorList>
    </citation>
    <scope>TISSUE SPECIFICITY</scope>
    <scope>DEVELOPMENTAL STAGE</scope>
</reference>
<reference key="6">
    <citation type="journal article" date="2005" name="Plant Cell Physiol.">
        <title>Expression patterns of genes encoding carbohydrate-metabolizing enzymes and their relationship to grain filling in rice (Oryza sativa L.): comparison of caryopses located at different positions in a panicle.</title>
        <authorList>
            <person name="Ishimaru T."/>
            <person name="Hirose T."/>
            <person name="Matsuda T."/>
            <person name="Goto A."/>
            <person name="Takahashi K."/>
            <person name="Sasaki H."/>
            <person name="Terao T."/>
            <person name="Ishii R."/>
            <person name="Ohsugi R."/>
            <person name="Yamagishi T."/>
        </authorList>
    </citation>
    <scope>DEVELOPMENTAL STAGE</scope>
</reference>
<dbReference type="EC" id="3.2.1.26"/>
<dbReference type="EMBL" id="AY578164">
    <property type="protein sequence ID" value="AAT84407.1"/>
    <property type="molecule type" value="mRNA"/>
</dbReference>
<dbReference type="EMBL" id="AP005738">
    <property type="protein sequence ID" value="BAD23559.1"/>
    <property type="molecule type" value="Genomic_DNA"/>
</dbReference>
<dbReference type="EMBL" id="AP008215">
    <property type="protein sequence ID" value="BAF24605.1"/>
    <property type="molecule type" value="Genomic_DNA"/>
</dbReference>
<dbReference type="EMBL" id="AP014965">
    <property type="protein sequence ID" value="BAT07071.1"/>
    <property type="molecule type" value="Genomic_DNA"/>
</dbReference>
<dbReference type="SMR" id="Q0J360"/>
<dbReference type="FunCoup" id="Q0J360">
    <property type="interactions" value="15"/>
</dbReference>
<dbReference type="STRING" id="39947.Q0J360"/>
<dbReference type="CAZy" id="GH32">
    <property type="family name" value="Glycoside Hydrolase Family 32"/>
</dbReference>
<dbReference type="GlyCosmos" id="Q0J360">
    <property type="glycosylation" value="3 sites, No reported glycans"/>
</dbReference>
<dbReference type="PaxDb" id="39947-Q0J360"/>
<dbReference type="EnsemblPlants" id="Os09t0255000-01">
    <property type="protein sequence ID" value="Os09t0255000-01"/>
    <property type="gene ID" value="Os09g0255000"/>
</dbReference>
<dbReference type="Gramene" id="Os09t0255000-01">
    <property type="protein sequence ID" value="Os09t0255000-01"/>
    <property type="gene ID" value="Os09g0255000"/>
</dbReference>
<dbReference type="KEGG" id="dosa:Os09g0255000"/>
<dbReference type="eggNOG" id="KOG0228">
    <property type="taxonomic scope" value="Eukaryota"/>
</dbReference>
<dbReference type="HOGENOM" id="CLU_001528_6_0_1"/>
<dbReference type="InParanoid" id="Q0J360"/>
<dbReference type="OMA" id="PMYYNGM"/>
<dbReference type="PlantReactome" id="R-OSA-1119626">
    <property type="pathway name" value="Fructan degradation"/>
</dbReference>
<dbReference type="Proteomes" id="UP000000763">
    <property type="component" value="Chromosome 9"/>
</dbReference>
<dbReference type="Proteomes" id="UP000059680">
    <property type="component" value="Chromosome 9"/>
</dbReference>
<dbReference type="GO" id="GO:0048046">
    <property type="term" value="C:apoplast"/>
    <property type="evidence" value="ECO:0007669"/>
    <property type="project" value="UniProtKB-SubCell"/>
</dbReference>
<dbReference type="GO" id="GO:0004564">
    <property type="term" value="F:beta-fructofuranosidase activity"/>
    <property type="evidence" value="ECO:0007669"/>
    <property type="project" value="UniProtKB-EC"/>
</dbReference>
<dbReference type="GO" id="GO:0005975">
    <property type="term" value="P:carbohydrate metabolic process"/>
    <property type="evidence" value="ECO:0007669"/>
    <property type="project" value="InterPro"/>
</dbReference>
<dbReference type="CDD" id="cd18624">
    <property type="entry name" value="GH32_Fruct1-like"/>
    <property type="match status" value="1"/>
</dbReference>
<dbReference type="FunFam" id="2.60.120.560:FF:000002">
    <property type="entry name" value="Beta-fructofuranosidase, insoluble isoenzyme CWINV1"/>
    <property type="match status" value="1"/>
</dbReference>
<dbReference type="Gene3D" id="2.60.120.560">
    <property type="entry name" value="Exo-inulinase, domain 1"/>
    <property type="match status" value="1"/>
</dbReference>
<dbReference type="Gene3D" id="2.115.10.20">
    <property type="entry name" value="Glycosyl hydrolase domain, family 43"/>
    <property type="match status" value="1"/>
</dbReference>
<dbReference type="InterPro" id="IPR013320">
    <property type="entry name" value="ConA-like_dom_sf"/>
</dbReference>
<dbReference type="InterPro" id="IPR050551">
    <property type="entry name" value="Fructan_Metab_Enzymes"/>
</dbReference>
<dbReference type="InterPro" id="IPR001362">
    <property type="entry name" value="Glyco_hydro_32"/>
</dbReference>
<dbReference type="InterPro" id="IPR013189">
    <property type="entry name" value="Glyco_hydro_32_C"/>
</dbReference>
<dbReference type="InterPro" id="IPR013148">
    <property type="entry name" value="Glyco_hydro_32_N"/>
</dbReference>
<dbReference type="InterPro" id="IPR023296">
    <property type="entry name" value="Glyco_hydro_beta-prop_sf"/>
</dbReference>
<dbReference type="PANTHER" id="PTHR31953">
    <property type="entry name" value="BETA-FRUCTOFURANOSIDASE, INSOLUBLE ISOENZYME CWINV1-RELATED"/>
    <property type="match status" value="1"/>
</dbReference>
<dbReference type="Pfam" id="PF08244">
    <property type="entry name" value="Glyco_hydro_32C"/>
    <property type="match status" value="1"/>
</dbReference>
<dbReference type="Pfam" id="PF00251">
    <property type="entry name" value="Glyco_hydro_32N"/>
    <property type="match status" value="1"/>
</dbReference>
<dbReference type="SMART" id="SM00640">
    <property type="entry name" value="Glyco_32"/>
    <property type="match status" value="1"/>
</dbReference>
<dbReference type="SUPFAM" id="SSF75005">
    <property type="entry name" value="Arabinanase/levansucrase/invertase"/>
    <property type="match status" value="1"/>
</dbReference>
<dbReference type="SUPFAM" id="SSF49899">
    <property type="entry name" value="Concanavalin A-like lectins/glucanases"/>
    <property type="match status" value="1"/>
</dbReference>
<name>INV7_ORYSJ</name>
<protein>
    <recommendedName>
        <fullName>Beta-fructofuranosidase, insoluble isoenzyme 7</fullName>
        <ecNumber>3.2.1.26</ecNumber>
    </recommendedName>
    <alternativeName>
        <fullName>Cell wall beta-fructosidase 7</fullName>
    </alternativeName>
    <alternativeName>
        <fullName>Invertase 7</fullName>
    </alternativeName>
    <alternativeName>
        <fullName>OsCIN7</fullName>
    </alternativeName>
    <alternativeName>
        <fullName>Sucrose hydrolase 7</fullName>
    </alternativeName>
</protein>